<protein>
    <recommendedName>
        <fullName evidence="1">Translation initiation factor IF-3</fullName>
    </recommendedName>
</protein>
<feature type="chain" id="PRO_1000202539" description="Translation initiation factor IF-3">
    <location>
        <begin position="1"/>
        <end position="180"/>
    </location>
</feature>
<reference key="1">
    <citation type="journal article" date="2009" name="J. Bacteriol.">
        <title>Genomic sequencing reveals regulatory mutations and recombinational events in the widely used MC4100 lineage of Escherichia coli K-12.</title>
        <authorList>
            <person name="Ferenci T."/>
            <person name="Zhou Z."/>
            <person name="Betteridge T."/>
            <person name="Ren Y."/>
            <person name="Liu Y."/>
            <person name="Feng L."/>
            <person name="Reeves P.R."/>
            <person name="Wang L."/>
        </authorList>
    </citation>
    <scope>NUCLEOTIDE SEQUENCE [LARGE SCALE GENOMIC DNA]</scope>
    <source>
        <strain>K12 / MC4100 / BW2952</strain>
    </source>
</reference>
<dbReference type="EMBL" id="CP001396">
    <property type="protein sequence ID" value="ACR65298.1"/>
    <property type="molecule type" value="Genomic_DNA"/>
</dbReference>
<dbReference type="RefSeq" id="WP_001700733.1">
    <property type="nucleotide sequence ID" value="NC_012759.1"/>
</dbReference>
<dbReference type="BMRB" id="C4ZYI0"/>
<dbReference type="SMR" id="C4ZYI0"/>
<dbReference type="GeneID" id="93775931"/>
<dbReference type="KEGG" id="ebw:BWG_1532"/>
<dbReference type="HOGENOM" id="CLU_054919_3_2_6"/>
<dbReference type="GO" id="GO:0005829">
    <property type="term" value="C:cytosol"/>
    <property type="evidence" value="ECO:0007669"/>
    <property type="project" value="TreeGrafter"/>
</dbReference>
<dbReference type="GO" id="GO:0016020">
    <property type="term" value="C:membrane"/>
    <property type="evidence" value="ECO:0007669"/>
    <property type="project" value="TreeGrafter"/>
</dbReference>
<dbReference type="GO" id="GO:0043022">
    <property type="term" value="F:ribosome binding"/>
    <property type="evidence" value="ECO:0007669"/>
    <property type="project" value="TreeGrafter"/>
</dbReference>
<dbReference type="GO" id="GO:0003743">
    <property type="term" value="F:translation initiation factor activity"/>
    <property type="evidence" value="ECO:0007669"/>
    <property type="project" value="UniProtKB-UniRule"/>
</dbReference>
<dbReference type="GO" id="GO:0032790">
    <property type="term" value="P:ribosome disassembly"/>
    <property type="evidence" value="ECO:0007669"/>
    <property type="project" value="TreeGrafter"/>
</dbReference>
<dbReference type="FunFam" id="3.10.20.80:FF:000001">
    <property type="entry name" value="Translation initiation factor IF-3"/>
    <property type="match status" value="1"/>
</dbReference>
<dbReference type="FunFam" id="3.30.110.10:FF:000001">
    <property type="entry name" value="Translation initiation factor IF-3"/>
    <property type="match status" value="1"/>
</dbReference>
<dbReference type="Gene3D" id="3.30.110.10">
    <property type="entry name" value="Translation initiation factor 3 (IF-3), C-terminal domain"/>
    <property type="match status" value="1"/>
</dbReference>
<dbReference type="Gene3D" id="3.10.20.80">
    <property type="entry name" value="Translation initiation factor 3 (IF-3), N-terminal domain"/>
    <property type="match status" value="1"/>
</dbReference>
<dbReference type="HAMAP" id="MF_00080">
    <property type="entry name" value="IF_3"/>
    <property type="match status" value="1"/>
</dbReference>
<dbReference type="InterPro" id="IPR036788">
    <property type="entry name" value="T_IF-3_C_sf"/>
</dbReference>
<dbReference type="InterPro" id="IPR036787">
    <property type="entry name" value="T_IF-3_N_sf"/>
</dbReference>
<dbReference type="InterPro" id="IPR019813">
    <property type="entry name" value="Translation_initiation_fac3_CS"/>
</dbReference>
<dbReference type="InterPro" id="IPR001288">
    <property type="entry name" value="Translation_initiation_fac_3"/>
</dbReference>
<dbReference type="InterPro" id="IPR019815">
    <property type="entry name" value="Translation_initiation_fac_3_C"/>
</dbReference>
<dbReference type="InterPro" id="IPR019814">
    <property type="entry name" value="Translation_initiation_fac_3_N"/>
</dbReference>
<dbReference type="NCBIfam" id="TIGR00168">
    <property type="entry name" value="infC"/>
    <property type="match status" value="1"/>
</dbReference>
<dbReference type="PANTHER" id="PTHR10938">
    <property type="entry name" value="TRANSLATION INITIATION FACTOR IF-3"/>
    <property type="match status" value="1"/>
</dbReference>
<dbReference type="PANTHER" id="PTHR10938:SF0">
    <property type="entry name" value="TRANSLATION INITIATION FACTOR IF-3, MITOCHONDRIAL"/>
    <property type="match status" value="1"/>
</dbReference>
<dbReference type="Pfam" id="PF00707">
    <property type="entry name" value="IF3_C"/>
    <property type="match status" value="1"/>
</dbReference>
<dbReference type="Pfam" id="PF05198">
    <property type="entry name" value="IF3_N"/>
    <property type="match status" value="1"/>
</dbReference>
<dbReference type="SUPFAM" id="SSF55200">
    <property type="entry name" value="Translation initiation factor IF3, C-terminal domain"/>
    <property type="match status" value="1"/>
</dbReference>
<dbReference type="SUPFAM" id="SSF54364">
    <property type="entry name" value="Translation initiation factor IF3, N-terminal domain"/>
    <property type="match status" value="1"/>
</dbReference>
<dbReference type="PROSITE" id="PS00938">
    <property type="entry name" value="IF3"/>
    <property type="match status" value="1"/>
</dbReference>
<organism>
    <name type="scientific">Escherichia coli (strain K12 / MC4100 / BW2952)</name>
    <dbReference type="NCBI Taxonomy" id="595496"/>
    <lineage>
        <taxon>Bacteria</taxon>
        <taxon>Pseudomonadati</taxon>
        <taxon>Pseudomonadota</taxon>
        <taxon>Gammaproteobacteria</taxon>
        <taxon>Enterobacterales</taxon>
        <taxon>Enterobacteriaceae</taxon>
        <taxon>Escherichia</taxon>
    </lineage>
</organism>
<accession>C4ZYI0</accession>
<gene>
    <name evidence="1" type="primary">infC</name>
    <name type="ordered locus">BWG_1532</name>
</gene>
<evidence type="ECO:0000255" key="1">
    <source>
        <dbReference type="HAMAP-Rule" id="MF_00080"/>
    </source>
</evidence>
<name>IF3_ECOBW</name>
<keyword id="KW-0963">Cytoplasm</keyword>
<keyword id="KW-0396">Initiation factor</keyword>
<keyword id="KW-0648">Protein biosynthesis</keyword>
<proteinExistence type="inferred from homology"/>
<comment type="function">
    <text evidence="1">IF-3 binds to the 30S ribosomal subunit and shifts the equilibrium between 70S ribosomes and their 50S and 30S subunits in favor of the free subunits, thus enhancing the availability of 30S subunits on which protein synthesis initiation begins.</text>
</comment>
<comment type="subunit">
    <text evidence="1">Monomer.</text>
</comment>
<comment type="subcellular location">
    <subcellularLocation>
        <location evidence="1">Cytoplasm</location>
    </subcellularLocation>
</comment>
<comment type="similarity">
    <text evidence="1">Belongs to the IF-3 family.</text>
</comment>
<sequence length="180" mass="20564">MKGGKRVQTARPNRINGEIRAQEVRLTGLEGEQLGIVSLREALEKAEEAGVDLVEISPNAEPPVCRIMDYGKFLYEKSKSSKEQKKKQKVIQVKEIKFRPGTDEGDYQVKLRSLIRFLEEGDKAKITLRFRGREMAHQQIGMEVLNRVKDDLQELAVVESFPTKIEGRQMIMVLAPKKKQ</sequence>